<keyword id="KW-0064">Aspartyl protease</keyword>
<keyword id="KW-0222">Digestion</keyword>
<keyword id="KW-0903">Direct protein sequencing</keyword>
<keyword id="KW-1015">Disulfide bond</keyword>
<keyword id="KW-0378">Hydrolase</keyword>
<keyword id="KW-0645">Protease</keyword>
<keyword id="KW-0964">Secreted</keyword>
<keyword id="KW-0732">Signal</keyword>
<keyword id="KW-0865">Zymogen</keyword>
<sequence>QLLEAAVVKVPLKKFKSIRETMKEKGLLGEFLRTHKYDPAWKYHFGDLSVSYEPMAYMDAAYFGEISIGTPPQNFLVLFDTGSSNLWVPSVYCQSQACTSHSRFNPSESSTYSTNGQTFSLQYGSGSLTGFFGYDTLTVQSIQVPNQEFGLSENEPGTNFVYAQFDGIMGLAYPTLSVDGATTAMQGMVQEGALTSPIFSVYLSDQQGSSGGAVVFGGVDSSLYTGQIYWAPVTQELYWQIGIEEFLIGGQASGWCSEGCQAIVDTGTSLLTVPQQYMSALLQATGAQEDEYGQFLVNCNSIQNLPTLTFIINGVEFPLPPSSYILNNNGYCTVGVEPTYLSAQNSQPLWILGDVFLRSYYSVYDLSNNRVGFATAA</sequence>
<comment type="function">
    <text>Hydrolyzes a variety of proteins.</text>
</comment>
<comment type="catalytic activity">
    <reaction>
        <text>More restricted specificity than pepsin A, but shows preferential cleavage at Tyr-|-Xaa bonds. High activity on hemoglobin.</text>
        <dbReference type="EC" id="3.4.23.3"/>
    </reaction>
</comment>
<comment type="subcellular location">
    <subcellularLocation>
        <location>Secreted</location>
    </subcellularLocation>
</comment>
<comment type="PTM">
    <text>Each pepsinogen is converted to corresponding pepsin at pH 2.0 in part as a result of the release of a 47 AA activation segment and in part as a result of stepwise proteolytic cleavage via an intermediate form(s).</text>
</comment>
<comment type="similarity">
    <text evidence="4">Belongs to the peptidase A1 family.</text>
</comment>
<feature type="signal peptide" evidence="2 3">
    <location>
        <begin position="1" status="less than"/>
        <end position="5"/>
    </location>
</feature>
<feature type="propeptide" id="PRO_0000026058" description="Activation peptide">
    <location>
        <begin position="6"/>
        <end position="31"/>
    </location>
</feature>
<feature type="propeptide" id="PRO_0000026059" description="Activation peptide">
    <location>
        <begin position="32"/>
        <end position="48"/>
    </location>
</feature>
<feature type="chain" id="PRO_0000026060" description="Gastricsin">
    <location>
        <begin position="49"/>
        <end position="377"/>
    </location>
</feature>
<feature type="domain" description="Peptidase A1" evidence="1">
    <location>
        <begin position="62"/>
        <end position="374"/>
    </location>
</feature>
<feature type="active site">
    <location>
        <position position="80"/>
    </location>
</feature>
<feature type="active site">
    <location>
        <position position="265"/>
    </location>
</feature>
<feature type="disulfide bond">
    <location>
        <begin position="93"/>
        <end position="98"/>
    </location>
</feature>
<feature type="disulfide bond">
    <location>
        <begin position="256"/>
        <end position="260"/>
    </location>
</feature>
<feature type="disulfide bond">
    <location>
        <begin position="299"/>
        <end position="332"/>
    </location>
</feature>
<feature type="sequence conflict" description="In Ref. 2; AA sequence." evidence="4" ref="2">
    <original>Y</original>
    <variation>V</variation>
    <location>
        <position position="331"/>
    </location>
</feature>
<feature type="sequence conflict" description="In Ref. 2; AA sequence." evidence="4" ref="2">
    <original>L</original>
    <variation>LVY</variation>
    <location>
        <position position="349"/>
    </location>
</feature>
<feature type="non-terminal residue">
    <location>
        <position position="1"/>
    </location>
</feature>
<proteinExistence type="evidence at protein level"/>
<dbReference type="EC" id="3.4.23.3"/>
<dbReference type="EMBL" id="X59754">
    <property type="protein sequence ID" value="CAA42426.1"/>
    <property type="molecule type" value="mRNA"/>
</dbReference>
<dbReference type="PIR" id="S19683">
    <property type="entry name" value="PEMQCJ"/>
</dbReference>
<dbReference type="SMR" id="P03955"/>
<dbReference type="MEROPS" id="A01.003"/>
<dbReference type="GO" id="GO:0005615">
    <property type="term" value="C:extracellular space"/>
    <property type="evidence" value="ECO:0007669"/>
    <property type="project" value="TreeGrafter"/>
</dbReference>
<dbReference type="GO" id="GO:0004190">
    <property type="term" value="F:aspartic-type endopeptidase activity"/>
    <property type="evidence" value="ECO:0007669"/>
    <property type="project" value="UniProtKB-KW"/>
</dbReference>
<dbReference type="GO" id="GO:0007586">
    <property type="term" value="P:digestion"/>
    <property type="evidence" value="ECO:0007669"/>
    <property type="project" value="UniProtKB-KW"/>
</dbReference>
<dbReference type="GO" id="GO:0006508">
    <property type="term" value="P:proteolysis"/>
    <property type="evidence" value="ECO:0007669"/>
    <property type="project" value="UniProtKB-KW"/>
</dbReference>
<dbReference type="CDD" id="cd05477">
    <property type="entry name" value="gastricsin"/>
    <property type="match status" value="1"/>
</dbReference>
<dbReference type="FunFam" id="2.40.70.10:FF:000006">
    <property type="entry name" value="Cathepsin E"/>
    <property type="match status" value="1"/>
</dbReference>
<dbReference type="FunFam" id="2.40.70.10:FF:000004">
    <property type="entry name" value="Pepsin A"/>
    <property type="match status" value="1"/>
</dbReference>
<dbReference type="Gene3D" id="6.10.140.60">
    <property type="match status" value="1"/>
</dbReference>
<dbReference type="Gene3D" id="2.40.70.10">
    <property type="entry name" value="Acid Proteases"/>
    <property type="match status" value="2"/>
</dbReference>
<dbReference type="InterPro" id="IPR001461">
    <property type="entry name" value="Aspartic_peptidase_A1"/>
</dbReference>
<dbReference type="InterPro" id="IPR001969">
    <property type="entry name" value="Aspartic_peptidase_AS"/>
</dbReference>
<dbReference type="InterPro" id="IPR012848">
    <property type="entry name" value="Aspartic_peptidase_N"/>
</dbReference>
<dbReference type="InterPro" id="IPR033121">
    <property type="entry name" value="PEPTIDASE_A1"/>
</dbReference>
<dbReference type="InterPro" id="IPR021109">
    <property type="entry name" value="Peptidase_aspartic_dom_sf"/>
</dbReference>
<dbReference type="PANTHER" id="PTHR47966">
    <property type="entry name" value="BETA-SITE APP-CLEAVING ENZYME, ISOFORM A-RELATED"/>
    <property type="match status" value="1"/>
</dbReference>
<dbReference type="PANTHER" id="PTHR47966:SF72">
    <property type="entry name" value="GASTRICSIN"/>
    <property type="match status" value="1"/>
</dbReference>
<dbReference type="Pfam" id="PF07966">
    <property type="entry name" value="A1_Propeptide"/>
    <property type="match status" value="1"/>
</dbReference>
<dbReference type="Pfam" id="PF00026">
    <property type="entry name" value="Asp"/>
    <property type="match status" value="1"/>
</dbReference>
<dbReference type="PRINTS" id="PR00792">
    <property type="entry name" value="PEPSIN"/>
</dbReference>
<dbReference type="SUPFAM" id="SSF50630">
    <property type="entry name" value="Acid proteases"/>
    <property type="match status" value="1"/>
</dbReference>
<dbReference type="PROSITE" id="PS00141">
    <property type="entry name" value="ASP_PROTEASE"/>
    <property type="match status" value="2"/>
</dbReference>
<dbReference type="PROSITE" id="PS51767">
    <property type="entry name" value="PEPTIDASE_A1"/>
    <property type="match status" value="1"/>
</dbReference>
<reference key="1">
    <citation type="journal article" date="1991" name="Eur. J. Biochem.">
        <title>Development-dependent expression of isozymogens of monkey pepsinogens and structural differences between them.</title>
        <authorList>
            <person name="Kageyama T."/>
            <person name="Tanabe K."/>
            <person name="Koiwai O."/>
        </authorList>
    </citation>
    <scope>NUCLEOTIDE SEQUENCE [MRNA]</scope>
    <source>
        <tissue>Gastric mucosa</tissue>
    </source>
</reference>
<reference key="2">
    <citation type="journal article" date="1986" name="J. Biol. Chem.">
        <title>The complete amino acid sequence of monkey progastricsin.</title>
        <authorList>
            <person name="Kageyama T."/>
            <person name="Takahashi K."/>
        </authorList>
    </citation>
    <scope>PROTEIN SEQUENCE OF 6-377</scope>
</reference>
<reference key="3">
    <citation type="journal article" date="1985" name="J. Biochem.">
        <title>Monkey pepsinogens and pepsins. VII. Analysis of the activation process and determination of the NH2-terminal 60-residue sequence of Japanese monkey progastricsin, and molecular evolution of pepsinogens.</title>
        <authorList>
            <person name="Kageyama T."/>
            <person name="Takahashi K."/>
        </authorList>
    </citation>
    <scope>PROTEIN SEQUENCE OF 6-65</scope>
</reference>
<evidence type="ECO:0000255" key="1">
    <source>
        <dbReference type="PROSITE-ProRule" id="PRU01103"/>
    </source>
</evidence>
<evidence type="ECO:0000269" key="2">
    <source>
    </source>
</evidence>
<evidence type="ECO:0000269" key="3">
    <source>
    </source>
</evidence>
<evidence type="ECO:0000305" key="4"/>
<name>PEPC_MACFU</name>
<protein>
    <recommendedName>
        <fullName>Gastricsin</fullName>
        <ecNumber>3.4.23.3</ecNumber>
    </recommendedName>
    <alternativeName>
        <fullName>Pepsinogen C</fullName>
    </alternativeName>
</protein>
<gene>
    <name type="primary">PGC</name>
</gene>
<accession>P03955</accession>
<organism>
    <name type="scientific">Macaca fuscata fuscata</name>
    <name type="common">Japanese macaque</name>
    <dbReference type="NCBI Taxonomy" id="9543"/>
    <lineage>
        <taxon>Eukaryota</taxon>
        <taxon>Metazoa</taxon>
        <taxon>Chordata</taxon>
        <taxon>Craniata</taxon>
        <taxon>Vertebrata</taxon>
        <taxon>Euteleostomi</taxon>
        <taxon>Mammalia</taxon>
        <taxon>Eutheria</taxon>
        <taxon>Euarchontoglires</taxon>
        <taxon>Primates</taxon>
        <taxon>Haplorrhini</taxon>
        <taxon>Catarrhini</taxon>
        <taxon>Cercopithecidae</taxon>
        <taxon>Cercopithecinae</taxon>
        <taxon>Macaca</taxon>
    </lineage>
</organism>